<proteinExistence type="inferred from homology"/>
<keyword id="KW-0119">Carbohydrate metabolism</keyword>
<keyword id="KW-0320">Glycogen biosynthesis</keyword>
<keyword id="KW-0321">Glycogen metabolism</keyword>
<keyword id="KW-0328">Glycosyltransferase</keyword>
<keyword id="KW-0808">Transferase</keyword>
<reference key="1">
    <citation type="journal article" date="2007" name="J. Bacteriol.">
        <title>Genome sequence and analysis of the soil cellulolytic actinomycete Thermobifida fusca YX.</title>
        <authorList>
            <person name="Lykidis A."/>
            <person name="Mavromatis K."/>
            <person name="Ivanova N."/>
            <person name="Anderson I."/>
            <person name="Land M."/>
            <person name="DiBartolo G."/>
            <person name="Martinez M."/>
            <person name="Lapidus A."/>
            <person name="Lucas S."/>
            <person name="Copeland A."/>
            <person name="Richardson P."/>
            <person name="Wilson D.B."/>
            <person name="Kyrpides N."/>
        </authorList>
    </citation>
    <scope>NUCLEOTIDE SEQUENCE [LARGE SCALE GENOMIC DNA]</scope>
    <source>
        <strain>YX</strain>
    </source>
</reference>
<name>GLGB_THEFY</name>
<protein>
    <recommendedName>
        <fullName evidence="1">1,4-alpha-glucan branching enzyme GlgB</fullName>
        <ecNumber evidence="1">2.4.1.18</ecNumber>
    </recommendedName>
    <alternativeName>
        <fullName evidence="1">1,4-alpha-D-glucan:1,4-alpha-D-glucan 6-glucosyl-transferase</fullName>
    </alternativeName>
    <alternativeName>
        <fullName evidence="1">Alpha-(1-&gt;4)-glucan branching enzyme</fullName>
    </alternativeName>
    <alternativeName>
        <fullName evidence="1">Glycogen branching enzyme</fullName>
        <shortName evidence="1">BE</shortName>
    </alternativeName>
</protein>
<dbReference type="EC" id="2.4.1.18" evidence="1"/>
<dbReference type="EMBL" id="CP000088">
    <property type="protein sequence ID" value="AAZ54620.1"/>
    <property type="molecule type" value="Genomic_DNA"/>
</dbReference>
<dbReference type="SMR" id="Q47SE7"/>
<dbReference type="STRING" id="269800.Tfu_0582"/>
<dbReference type="CAZy" id="CBM48">
    <property type="family name" value="Carbohydrate-Binding Module Family 48"/>
</dbReference>
<dbReference type="CAZy" id="GH13">
    <property type="family name" value="Glycoside Hydrolase Family 13"/>
</dbReference>
<dbReference type="KEGG" id="tfu:Tfu_0582"/>
<dbReference type="eggNOG" id="COG0296">
    <property type="taxonomic scope" value="Bacteria"/>
</dbReference>
<dbReference type="HOGENOM" id="CLU_004245_3_2_11"/>
<dbReference type="OrthoDB" id="9800174at2"/>
<dbReference type="UniPathway" id="UPA00164"/>
<dbReference type="GO" id="GO:0005829">
    <property type="term" value="C:cytosol"/>
    <property type="evidence" value="ECO:0007669"/>
    <property type="project" value="TreeGrafter"/>
</dbReference>
<dbReference type="GO" id="GO:0003844">
    <property type="term" value="F:1,4-alpha-glucan branching enzyme activity"/>
    <property type="evidence" value="ECO:0007669"/>
    <property type="project" value="UniProtKB-UniRule"/>
</dbReference>
<dbReference type="GO" id="GO:0043169">
    <property type="term" value="F:cation binding"/>
    <property type="evidence" value="ECO:0007669"/>
    <property type="project" value="InterPro"/>
</dbReference>
<dbReference type="GO" id="GO:0004553">
    <property type="term" value="F:hydrolase activity, hydrolyzing O-glycosyl compounds"/>
    <property type="evidence" value="ECO:0007669"/>
    <property type="project" value="InterPro"/>
</dbReference>
<dbReference type="GO" id="GO:0005978">
    <property type="term" value="P:glycogen biosynthetic process"/>
    <property type="evidence" value="ECO:0007669"/>
    <property type="project" value="UniProtKB-UniRule"/>
</dbReference>
<dbReference type="CDD" id="cd11322">
    <property type="entry name" value="AmyAc_Glg_BE"/>
    <property type="match status" value="1"/>
</dbReference>
<dbReference type="CDD" id="cd02855">
    <property type="entry name" value="E_set_GBE_prok_N"/>
    <property type="match status" value="1"/>
</dbReference>
<dbReference type="FunFam" id="2.60.40.10:FF:000169">
    <property type="entry name" value="1,4-alpha-glucan branching enzyme GlgB"/>
    <property type="match status" value="1"/>
</dbReference>
<dbReference type="FunFam" id="3.20.20.80:FF:000003">
    <property type="entry name" value="1,4-alpha-glucan branching enzyme GlgB"/>
    <property type="match status" value="1"/>
</dbReference>
<dbReference type="Gene3D" id="3.20.20.80">
    <property type="entry name" value="Glycosidases"/>
    <property type="match status" value="1"/>
</dbReference>
<dbReference type="Gene3D" id="2.60.40.1180">
    <property type="entry name" value="Golgi alpha-mannosidase II"/>
    <property type="match status" value="1"/>
</dbReference>
<dbReference type="Gene3D" id="2.60.40.10">
    <property type="entry name" value="Immunoglobulins"/>
    <property type="match status" value="2"/>
</dbReference>
<dbReference type="HAMAP" id="MF_00685">
    <property type="entry name" value="GlgB"/>
    <property type="match status" value="1"/>
</dbReference>
<dbReference type="InterPro" id="IPR006048">
    <property type="entry name" value="A-amylase/branching_C"/>
</dbReference>
<dbReference type="InterPro" id="IPR037439">
    <property type="entry name" value="Branching_enzy"/>
</dbReference>
<dbReference type="InterPro" id="IPR006407">
    <property type="entry name" value="GlgB"/>
</dbReference>
<dbReference type="InterPro" id="IPR054169">
    <property type="entry name" value="GlgB_N"/>
</dbReference>
<dbReference type="InterPro" id="IPR044143">
    <property type="entry name" value="GlgB_N_E_set_prok"/>
</dbReference>
<dbReference type="InterPro" id="IPR006047">
    <property type="entry name" value="Glyco_hydro_13_cat_dom"/>
</dbReference>
<dbReference type="InterPro" id="IPR004193">
    <property type="entry name" value="Glyco_hydro_13_N"/>
</dbReference>
<dbReference type="InterPro" id="IPR013780">
    <property type="entry name" value="Glyco_hydro_b"/>
</dbReference>
<dbReference type="InterPro" id="IPR017853">
    <property type="entry name" value="Glycoside_hydrolase_SF"/>
</dbReference>
<dbReference type="InterPro" id="IPR013783">
    <property type="entry name" value="Ig-like_fold"/>
</dbReference>
<dbReference type="InterPro" id="IPR014756">
    <property type="entry name" value="Ig_E-set"/>
</dbReference>
<dbReference type="NCBIfam" id="TIGR01515">
    <property type="entry name" value="branching_enzym"/>
    <property type="match status" value="1"/>
</dbReference>
<dbReference type="NCBIfam" id="NF003811">
    <property type="entry name" value="PRK05402.1"/>
    <property type="match status" value="1"/>
</dbReference>
<dbReference type="NCBIfam" id="NF008967">
    <property type="entry name" value="PRK12313.1"/>
    <property type="match status" value="1"/>
</dbReference>
<dbReference type="PANTHER" id="PTHR43651">
    <property type="entry name" value="1,4-ALPHA-GLUCAN-BRANCHING ENZYME"/>
    <property type="match status" value="1"/>
</dbReference>
<dbReference type="PANTHER" id="PTHR43651:SF3">
    <property type="entry name" value="1,4-ALPHA-GLUCAN-BRANCHING ENZYME"/>
    <property type="match status" value="1"/>
</dbReference>
<dbReference type="Pfam" id="PF00128">
    <property type="entry name" value="Alpha-amylase"/>
    <property type="match status" value="1"/>
</dbReference>
<dbReference type="Pfam" id="PF02806">
    <property type="entry name" value="Alpha-amylase_C"/>
    <property type="match status" value="1"/>
</dbReference>
<dbReference type="Pfam" id="PF02922">
    <property type="entry name" value="CBM_48"/>
    <property type="match status" value="1"/>
</dbReference>
<dbReference type="Pfam" id="PF22019">
    <property type="entry name" value="GlgB_N"/>
    <property type="match status" value="1"/>
</dbReference>
<dbReference type="PIRSF" id="PIRSF000463">
    <property type="entry name" value="GlgB"/>
    <property type="match status" value="1"/>
</dbReference>
<dbReference type="SMART" id="SM00642">
    <property type="entry name" value="Aamy"/>
    <property type="match status" value="1"/>
</dbReference>
<dbReference type="SUPFAM" id="SSF51445">
    <property type="entry name" value="(Trans)glycosidases"/>
    <property type="match status" value="1"/>
</dbReference>
<dbReference type="SUPFAM" id="SSF81296">
    <property type="entry name" value="E set domains"/>
    <property type="match status" value="2"/>
</dbReference>
<dbReference type="SUPFAM" id="SSF51011">
    <property type="entry name" value="Glycosyl hydrolase domain"/>
    <property type="match status" value="1"/>
</dbReference>
<evidence type="ECO:0000255" key="1">
    <source>
        <dbReference type="HAMAP-Rule" id="MF_00685"/>
    </source>
</evidence>
<comment type="function">
    <text evidence="1">Catalyzes the formation of the alpha-1,6-glucosidic linkages in glycogen by scission of a 1,4-alpha-linked oligosaccharide from growing alpha-1,4-glucan chains and the subsequent attachment of the oligosaccharide to the alpha-1,6 position.</text>
</comment>
<comment type="catalytic activity">
    <reaction evidence="1">
        <text>Transfers a segment of a (1-&gt;4)-alpha-D-glucan chain to a primary hydroxy group in a similar glucan chain.</text>
        <dbReference type="EC" id="2.4.1.18"/>
    </reaction>
</comment>
<comment type="pathway">
    <text evidence="1">Glycan biosynthesis; glycogen biosynthesis.</text>
</comment>
<comment type="subunit">
    <text evidence="1">Monomer.</text>
</comment>
<comment type="similarity">
    <text evidence="1">Belongs to the glycosyl hydrolase 13 family. GlgB subfamily.</text>
</comment>
<accession>Q47SE7</accession>
<organism>
    <name type="scientific">Thermobifida fusca (strain YX)</name>
    <dbReference type="NCBI Taxonomy" id="269800"/>
    <lineage>
        <taxon>Bacteria</taxon>
        <taxon>Bacillati</taxon>
        <taxon>Actinomycetota</taxon>
        <taxon>Actinomycetes</taxon>
        <taxon>Streptosporangiales</taxon>
        <taxon>Nocardiopsidaceae</taxon>
        <taxon>Thermobifida</taxon>
    </lineage>
</organism>
<sequence>MTARPAVRQPAGLPCPQPCNRYGYPMTNALLAEIDALVAGTHHNPHALLGAHPGPEGVWVRALRPLARSVHVLLANGSRVELPHLHKGVFAGVVPGAEVPDYRLVVRYDDGTELTVDDPYRHLPTLGELDIHLIQEGRHEELWRVLGAHTKRFPSVLGDTEGTAFTVWAPNARGVRVIGDFNHWDGTGHPMRSLGSCGVWELFIPGVGDGTRYKYQVLGADGVWREKADPVAFATQAPPETASVVFTSRYTWQDDEWLTQRAAADLHRKPMSIYEVHLGSWRPGLSYRELADQLVDYVRELGFTHVEFLPVAEHPFGGSWGYQVTSYYAPTARFGSPDDFRYLVDRLHQAGIGVFLDWVPAHFPKDDWALSRFDGTALYEHPDPRRGIHPDWDTLIFNYGRTEVRNFLVANALFWLEEFHIDGLRVDAVASMLYLDYSRESGQWEPNAYGGRENLDAIDFLRELNATAYRRNPGIAMIAEESTAWPGVTRSTDTGGLGFGFKWNMGWMHDTLSYLQHDPVHRQYHHNEVTFSMVYAYSENYVLPLSHDEVVHGKRSLLYKMPGNEWQRCANLRALLAYMWAHPGKQLLFMGNEIAQGDEWSHDAGVQWWLLRYPHHAGMRRLVADLNRLYRNTRALWSQDTVPEGFTWLDGGDASGNTLSFLRWGDDGSVLACLVNFSGRPHPERRVGLPYAGRWREILNTDAVLYGGSGVSQPGIIEASEETPWQGQPASALVTYPPLGVSWLVFDGT</sequence>
<feature type="chain" id="PRO_0000260710" description="1,4-alpha-glucan branching enzyme GlgB">
    <location>
        <begin position="1"/>
        <end position="749"/>
    </location>
</feature>
<feature type="active site" description="Nucleophile" evidence="1">
    <location>
        <position position="427"/>
    </location>
</feature>
<feature type="active site" description="Proton donor" evidence="1">
    <location>
        <position position="480"/>
    </location>
</feature>
<gene>
    <name evidence="1" type="primary">glgB</name>
    <name type="ordered locus">Tfu_0582</name>
</gene>